<proteinExistence type="inferred from homology"/>
<reference key="1">
    <citation type="submission" date="2006-12" db="EMBL/GenBank/DDBJ databases">
        <title>Complete sequence of Mycobacterium vanbaalenii PYR-1.</title>
        <authorList>
            <consortium name="US DOE Joint Genome Institute"/>
            <person name="Copeland A."/>
            <person name="Lucas S."/>
            <person name="Lapidus A."/>
            <person name="Barry K."/>
            <person name="Detter J.C."/>
            <person name="Glavina del Rio T."/>
            <person name="Hammon N."/>
            <person name="Israni S."/>
            <person name="Dalin E."/>
            <person name="Tice H."/>
            <person name="Pitluck S."/>
            <person name="Singan V."/>
            <person name="Schmutz J."/>
            <person name="Larimer F."/>
            <person name="Land M."/>
            <person name="Hauser L."/>
            <person name="Kyrpides N."/>
            <person name="Anderson I.J."/>
            <person name="Miller C."/>
            <person name="Richardson P."/>
        </authorList>
    </citation>
    <scope>NUCLEOTIDE SEQUENCE [LARGE SCALE GENOMIC DNA]</scope>
    <source>
        <strain>DSM 7251 / JCM 13017 / BCRC 16820 / KCTC 9966 / NRRL B-24157 / PYR-1</strain>
    </source>
</reference>
<name>RLMN_MYCVP</name>
<accession>A1T787</accession>
<comment type="function">
    <text evidence="1">Specifically methylates position 2 of adenine 2503 in 23S rRNA and position 2 of adenine 37 in tRNAs.</text>
</comment>
<comment type="catalytic activity">
    <reaction evidence="1">
        <text>adenosine(2503) in 23S rRNA + 2 reduced [2Fe-2S]-[ferredoxin] + 2 S-adenosyl-L-methionine = 2-methyladenosine(2503) in 23S rRNA + 5'-deoxyadenosine + L-methionine + 2 oxidized [2Fe-2S]-[ferredoxin] + S-adenosyl-L-homocysteine</text>
        <dbReference type="Rhea" id="RHEA:42916"/>
        <dbReference type="Rhea" id="RHEA-COMP:10000"/>
        <dbReference type="Rhea" id="RHEA-COMP:10001"/>
        <dbReference type="Rhea" id="RHEA-COMP:10152"/>
        <dbReference type="Rhea" id="RHEA-COMP:10282"/>
        <dbReference type="ChEBI" id="CHEBI:17319"/>
        <dbReference type="ChEBI" id="CHEBI:33737"/>
        <dbReference type="ChEBI" id="CHEBI:33738"/>
        <dbReference type="ChEBI" id="CHEBI:57844"/>
        <dbReference type="ChEBI" id="CHEBI:57856"/>
        <dbReference type="ChEBI" id="CHEBI:59789"/>
        <dbReference type="ChEBI" id="CHEBI:74411"/>
        <dbReference type="ChEBI" id="CHEBI:74497"/>
        <dbReference type="EC" id="2.1.1.192"/>
    </reaction>
</comment>
<comment type="catalytic activity">
    <reaction evidence="1">
        <text>adenosine(37) in tRNA + 2 reduced [2Fe-2S]-[ferredoxin] + 2 S-adenosyl-L-methionine = 2-methyladenosine(37) in tRNA + 5'-deoxyadenosine + L-methionine + 2 oxidized [2Fe-2S]-[ferredoxin] + S-adenosyl-L-homocysteine</text>
        <dbReference type="Rhea" id="RHEA:43332"/>
        <dbReference type="Rhea" id="RHEA-COMP:10000"/>
        <dbReference type="Rhea" id="RHEA-COMP:10001"/>
        <dbReference type="Rhea" id="RHEA-COMP:10162"/>
        <dbReference type="Rhea" id="RHEA-COMP:10485"/>
        <dbReference type="ChEBI" id="CHEBI:17319"/>
        <dbReference type="ChEBI" id="CHEBI:33737"/>
        <dbReference type="ChEBI" id="CHEBI:33738"/>
        <dbReference type="ChEBI" id="CHEBI:57844"/>
        <dbReference type="ChEBI" id="CHEBI:57856"/>
        <dbReference type="ChEBI" id="CHEBI:59789"/>
        <dbReference type="ChEBI" id="CHEBI:74411"/>
        <dbReference type="ChEBI" id="CHEBI:74497"/>
        <dbReference type="EC" id="2.1.1.192"/>
    </reaction>
</comment>
<comment type="cofactor">
    <cofactor evidence="1">
        <name>[4Fe-4S] cluster</name>
        <dbReference type="ChEBI" id="CHEBI:49883"/>
    </cofactor>
    <text evidence="1">Binds 1 [4Fe-4S] cluster. The cluster is coordinated with 3 cysteines and an exchangeable S-adenosyl-L-methionine.</text>
</comment>
<comment type="subcellular location">
    <subcellularLocation>
        <location evidence="1">Cytoplasm</location>
    </subcellularLocation>
</comment>
<comment type="miscellaneous">
    <text evidence="1">Reaction proceeds by a ping-pong mechanism involving intermediate methylation of a conserved cysteine residue.</text>
</comment>
<comment type="similarity">
    <text evidence="1">Belongs to the radical SAM superfamily. RlmN family.</text>
</comment>
<sequence>MPNPLPLVFDAPRRAMPPRHFADLDESGRAAAVAELGLPAFRAKQLANQYYGRLIADPTQMTDLPAAVRERVADALFPTLFGAAREIECDSGETRKVLWRAVDGTTFESVLMRYPDRNTVCISSQAGCGMACPFCATGQGGLKRNLSTAEILEQVRAASAELRDRDGGRLSNVVFMGMGEPLANYNRVVAAVRRITASSPNGFGISARSVTVSTVGLAPAIRKLADEKLNVTLALSLHTPDDELRDTLVPVNNRWKVDEVLDAARYYADVTGRRVSIEYALIRDVNDQPWRADLLGKKLHGELGPLVHVNLIPLNPTPGSEWDASPKPVEREFVRRVRAKGVSCTVRDTRGREIAAACGQLAAEG</sequence>
<keyword id="KW-0004">4Fe-4S</keyword>
<keyword id="KW-0963">Cytoplasm</keyword>
<keyword id="KW-1015">Disulfide bond</keyword>
<keyword id="KW-0408">Iron</keyword>
<keyword id="KW-0411">Iron-sulfur</keyword>
<keyword id="KW-0479">Metal-binding</keyword>
<keyword id="KW-0489">Methyltransferase</keyword>
<keyword id="KW-0698">rRNA processing</keyword>
<keyword id="KW-0949">S-adenosyl-L-methionine</keyword>
<keyword id="KW-0808">Transferase</keyword>
<keyword id="KW-0819">tRNA processing</keyword>
<evidence type="ECO:0000255" key="1">
    <source>
        <dbReference type="HAMAP-Rule" id="MF_01849"/>
    </source>
</evidence>
<evidence type="ECO:0000255" key="2">
    <source>
        <dbReference type="PROSITE-ProRule" id="PRU01266"/>
    </source>
</evidence>
<feature type="chain" id="PRO_0000350270" description="Probable dual-specificity RNA methyltransferase RlmN">
    <location>
        <begin position="1"/>
        <end position="365"/>
    </location>
</feature>
<feature type="domain" description="Radical SAM core" evidence="2">
    <location>
        <begin position="114"/>
        <end position="352"/>
    </location>
</feature>
<feature type="active site" description="Proton acceptor" evidence="1">
    <location>
        <position position="108"/>
    </location>
</feature>
<feature type="active site" description="S-methylcysteine intermediate" evidence="1">
    <location>
        <position position="358"/>
    </location>
</feature>
<feature type="binding site" evidence="1">
    <location>
        <position position="128"/>
    </location>
    <ligand>
        <name>[4Fe-4S] cluster</name>
        <dbReference type="ChEBI" id="CHEBI:49883"/>
        <note>4Fe-4S-S-AdoMet</note>
    </ligand>
</feature>
<feature type="binding site" evidence="1">
    <location>
        <position position="132"/>
    </location>
    <ligand>
        <name>[4Fe-4S] cluster</name>
        <dbReference type="ChEBI" id="CHEBI:49883"/>
        <note>4Fe-4S-S-AdoMet</note>
    </ligand>
</feature>
<feature type="binding site" evidence="1">
    <location>
        <position position="135"/>
    </location>
    <ligand>
        <name>[4Fe-4S] cluster</name>
        <dbReference type="ChEBI" id="CHEBI:49883"/>
        <note>4Fe-4S-S-AdoMet</note>
    </ligand>
</feature>
<feature type="binding site" evidence="1">
    <location>
        <begin position="179"/>
        <end position="180"/>
    </location>
    <ligand>
        <name>S-adenosyl-L-methionine</name>
        <dbReference type="ChEBI" id="CHEBI:59789"/>
    </ligand>
</feature>
<feature type="binding site" evidence="1">
    <location>
        <position position="213"/>
    </location>
    <ligand>
        <name>S-adenosyl-L-methionine</name>
        <dbReference type="ChEBI" id="CHEBI:59789"/>
    </ligand>
</feature>
<feature type="binding site" evidence="1">
    <location>
        <begin position="236"/>
        <end position="238"/>
    </location>
    <ligand>
        <name>S-adenosyl-L-methionine</name>
        <dbReference type="ChEBI" id="CHEBI:59789"/>
    </ligand>
</feature>
<feature type="binding site" evidence="1">
    <location>
        <position position="315"/>
    </location>
    <ligand>
        <name>S-adenosyl-L-methionine</name>
        <dbReference type="ChEBI" id="CHEBI:59789"/>
    </ligand>
</feature>
<feature type="disulfide bond" description="(transient)" evidence="1">
    <location>
        <begin position="121"/>
        <end position="358"/>
    </location>
</feature>
<dbReference type="EC" id="2.1.1.192" evidence="1"/>
<dbReference type="EMBL" id="CP000511">
    <property type="protein sequence ID" value="ABM13037.1"/>
    <property type="molecule type" value="Genomic_DNA"/>
</dbReference>
<dbReference type="RefSeq" id="WP_011779450.1">
    <property type="nucleotide sequence ID" value="NC_008726.1"/>
</dbReference>
<dbReference type="SMR" id="A1T787"/>
<dbReference type="STRING" id="350058.Mvan_2223"/>
<dbReference type="KEGG" id="mva:Mvan_2223"/>
<dbReference type="eggNOG" id="COG0820">
    <property type="taxonomic scope" value="Bacteria"/>
</dbReference>
<dbReference type="HOGENOM" id="CLU_029101_0_2_11"/>
<dbReference type="Proteomes" id="UP000009159">
    <property type="component" value="Chromosome"/>
</dbReference>
<dbReference type="GO" id="GO:0005737">
    <property type="term" value="C:cytoplasm"/>
    <property type="evidence" value="ECO:0007669"/>
    <property type="project" value="UniProtKB-SubCell"/>
</dbReference>
<dbReference type="GO" id="GO:0051539">
    <property type="term" value="F:4 iron, 4 sulfur cluster binding"/>
    <property type="evidence" value="ECO:0007669"/>
    <property type="project" value="UniProtKB-UniRule"/>
</dbReference>
<dbReference type="GO" id="GO:0046872">
    <property type="term" value="F:metal ion binding"/>
    <property type="evidence" value="ECO:0007669"/>
    <property type="project" value="UniProtKB-KW"/>
</dbReference>
<dbReference type="GO" id="GO:0070040">
    <property type="term" value="F:rRNA (adenine(2503)-C2-)-methyltransferase activity"/>
    <property type="evidence" value="ECO:0007669"/>
    <property type="project" value="UniProtKB-UniRule"/>
</dbReference>
<dbReference type="GO" id="GO:0019843">
    <property type="term" value="F:rRNA binding"/>
    <property type="evidence" value="ECO:0007669"/>
    <property type="project" value="UniProtKB-UniRule"/>
</dbReference>
<dbReference type="GO" id="GO:0002935">
    <property type="term" value="F:tRNA (adenine(37)-C2)-methyltransferase activity"/>
    <property type="evidence" value="ECO:0007669"/>
    <property type="project" value="UniProtKB-UniRule"/>
</dbReference>
<dbReference type="GO" id="GO:0000049">
    <property type="term" value="F:tRNA binding"/>
    <property type="evidence" value="ECO:0007669"/>
    <property type="project" value="UniProtKB-UniRule"/>
</dbReference>
<dbReference type="GO" id="GO:0070475">
    <property type="term" value="P:rRNA base methylation"/>
    <property type="evidence" value="ECO:0007669"/>
    <property type="project" value="UniProtKB-UniRule"/>
</dbReference>
<dbReference type="GO" id="GO:0030488">
    <property type="term" value="P:tRNA methylation"/>
    <property type="evidence" value="ECO:0007669"/>
    <property type="project" value="UniProtKB-UniRule"/>
</dbReference>
<dbReference type="CDD" id="cd01335">
    <property type="entry name" value="Radical_SAM"/>
    <property type="match status" value="1"/>
</dbReference>
<dbReference type="FunFam" id="3.20.20.70:FF:000014">
    <property type="entry name" value="Probable dual-specificity RNA methyltransferase RlmN"/>
    <property type="match status" value="1"/>
</dbReference>
<dbReference type="Gene3D" id="1.10.150.530">
    <property type="match status" value="1"/>
</dbReference>
<dbReference type="Gene3D" id="3.20.20.70">
    <property type="entry name" value="Aldolase class I"/>
    <property type="match status" value="1"/>
</dbReference>
<dbReference type="HAMAP" id="MF_01849">
    <property type="entry name" value="RNA_methyltr_RlmN"/>
    <property type="match status" value="1"/>
</dbReference>
<dbReference type="InterPro" id="IPR013785">
    <property type="entry name" value="Aldolase_TIM"/>
</dbReference>
<dbReference type="InterPro" id="IPR006638">
    <property type="entry name" value="Elp3/MiaA/NifB-like_rSAM"/>
</dbReference>
<dbReference type="InterPro" id="IPR040072">
    <property type="entry name" value="Methyltransferase_A"/>
</dbReference>
<dbReference type="InterPro" id="IPR027492">
    <property type="entry name" value="RNA_MTrfase_RlmN"/>
</dbReference>
<dbReference type="InterPro" id="IPR004383">
    <property type="entry name" value="rRNA_lsu_MTrfase_RlmN/Cfr"/>
</dbReference>
<dbReference type="InterPro" id="IPR007197">
    <property type="entry name" value="rSAM"/>
</dbReference>
<dbReference type="NCBIfam" id="TIGR00048">
    <property type="entry name" value="rRNA_mod_RlmN"/>
    <property type="match status" value="1"/>
</dbReference>
<dbReference type="PANTHER" id="PTHR30544">
    <property type="entry name" value="23S RRNA METHYLTRANSFERASE"/>
    <property type="match status" value="1"/>
</dbReference>
<dbReference type="PANTHER" id="PTHR30544:SF5">
    <property type="entry name" value="RADICAL SAM CORE DOMAIN-CONTAINING PROTEIN"/>
    <property type="match status" value="1"/>
</dbReference>
<dbReference type="Pfam" id="PF04055">
    <property type="entry name" value="Radical_SAM"/>
    <property type="match status" value="1"/>
</dbReference>
<dbReference type="PIRSF" id="PIRSF006004">
    <property type="entry name" value="CHP00048"/>
    <property type="match status" value="1"/>
</dbReference>
<dbReference type="SFLD" id="SFLDF00275">
    <property type="entry name" value="adenosine_C2_methyltransferase"/>
    <property type="match status" value="1"/>
</dbReference>
<dbReference type="SFLD" id="SFLDG01062">
    <property type="entry name" value="methyltransferase_(Class_A)"/>
    <property type="match status" value="1"/>
</dbReference>
<dbReference type="SMART" id="SM00729">
    <property type="entry name" value="Elp3"/>
    <property type="match status" value="1"/>
</dbReference>
<dbReference type="SUPFAM" id="SSF102114">
    <property type="entry name" value="Radical SAM enzymes"/>
    <property type="match status" value="1"/>
</dbReference>
<dbReference type="PROSITE" id="PS51918">
    <property type="entry name" value="RADICAL_SAM"/>
    <property type="match status" value="1"/>
</dbReference>
<organism>
    <name type="scientific">Mycolicibacterium vanbaalenii (strain DSM 7251 / JCM 13017 / BCRC 16820 / KCTC 9966 / NRRL B-24157 / PYR-1)</name>
    <name type="common">Mycobacterium vanbaalenii</name>
    <dbReference type="NCBI Taxonomy" id="350058"/>
    <lineage>
        <taxon>Bacteria</taxon>
        <taxon>Bacillati</taxon>
        <taxon>Actinomycetota</taxon>
        <taxon>Actinomycetes</taxon>
        <taxon>Mycobacteriales</taxon>
        <taxon>Mycobacteriaceae</taxon>
        <taxon>Mycolicibacterium</taxon>
    </lineage>
</organism>
<protein>
    <recommendedName>
        <fullName evidence="1">Probable dual-specificity RNA methyltransferase RlmN</fullName>
        <ecNumber evidence="1">2.1.1.192</ecNumber>
    </recommendedName>
    <alternativeName>
        <fullName evidence="1">23S rRNA (adenine(2503)-C(2))-methyltransferase</fullName>
    </alternativeName>
    <alternativeName>
        <fullName evidence="1">23S rRNA m2A2503 methyltransferase</fullName>
    </alternativeName>
    <alternativeName>
        <fullName evidence="1">Ribosomal RNA large subunit methyltransferase N</fullName>
    </alternativeName>
    <alternativeName>
        <fullName evidence="1">tRNA (adenine(37)-C(2))-methyltransferase</fullName>
    </alternativeName>
    <alternativeName>
        <fullName evidence="1">tRNA m2A37 methyltransferase</fullName>
    </alternativeName>
</protein>
<gene>
    <name evidence="1" type="primary">rlmN</name>
    <name type="ordered locus">Mvan_2223</name>
</gene>